<keyword id="KW-1185">Reference proteome</keyword>
<keyword id="KW-0687">Ribonucleoprotein</keyword>
<keyword id="KW-0689">Ribosomal protein</keyword>
<keyword id="KW-0694">RNA-binding</keyword>
<keyword id="KW-0699">rRNA-binding</keyword>
<comment type="function">
    <text evidence="1">One of the early assembly proteins it binds 23S rRNA. One of the proteins that surrounds the polypeptide exit tunnel on the outside of the ribosome. Forms the main docking site for trigger factor binding to the ribosome.</text>
</comment>
<comment type="subunit">
    <text evidence="1">Part of the 50S ribosomal subunit. Contacts protein L29, and trigger factor when it is bound to the ribosome.</text>
</comment>
<comment type="similarity">
    <text evidence="1">Belongs to the universal ribosomal protein uL23 family.</text>
</comment>
<organism>
    <name type="scientific">Prochlorococcus marinus (strain MIT 9301)</name>
    <dbReference type="NCBI Taxonomy" id="167546"/>
    <lineage>
        <taxon>Bacteria</taxon>
        <taxon>Bacillati</taxon>
        <taxon>Cyanobacteriota</taxon>
        <taxon>Cyanophyceae</taxon>
        <taxon>Synechococcales</taxon>
        <taxon>Prochlorococcaceae</taxon>
        <taxon>Prochlorococcus</taxon>
    </lineage>
</organism>
<sequence length="100" mass="11284">MSKLFNSRLADVIRKPVITEKATNALDFNQYTFEVDHRAAKPQIKAAIEALFSVKVIGVNTMNPPRRTRRVGKFSGKRSQVKKAIVRLAEGDKIQLFPES</sequence>
<name>RL23_PROM0</name>
<proteinExistence type="inferred from homology"/>
<accession>A3PF45</accession>
<reference key="1">
    <citation type="journal article" date="2007" name="PLoS Genet.">
        <title>Patterns and implications of gene gain and loss in the evolution of Prochlorococcus.</title>
        <authorList>
            <person name="Kettler G.C."/>
            <person name="Martiny A.C."/>
            <person name="Huang K."/>
            <person name="Zucker J."/>
            <person name="Coleman M.L."/>
            <person name="Rodrigue S."/>
            <person name="Chen F."/>
            <person name="Lapidus A."/>
            <person name="Ferriera S."/>
            <person name="Johnson J."/>
            <person name="Steglich C."/>
            <person name="Church G.M."/>
            <person name="Richardson P."/>
            <person name="Chisholm S.W."/>
        </authorList>
    </citation>
    <scope>NUCLEOTIDE SEQUENCE [LARGE SCALE GENOMIC DNA]</scope>
    <source>
        <strain>MIT 9301</strain>
    </source>
</reference>
<dbReference type="EMBL" id="CP000576">
    <property type="protein sequence ID" value="ABO18370.1"/>
    <property type="molecule type" value="Genomic_DNA"/>
</dbReference>
<dbReference type="RefSeq" id="WP_011863658.1">
    <property type="nucleotide sequence ID" value="NC_009091.1"/>
</dbReference>
<dbReference type="SMR" id="A3PF45"/>
<dbReference type="STRING" id="167546.P9301_17471"/>
<dbReference type="KEGG" id="pmg:P9301_17471"/>
<dbReference type="eggNOG" id="COG0089">
    <property type="taxonomic scope" value="Bacteria"/>
</dbReference>
<dbReference type="HOGENOM" id="CLU_037562_3_2_3"/>
<dbReference type="OrthoDB" id="9793353at2"/>
<dbReference type="Proteomes" id="UP000001430">
    <property type="component" value="Chromosome"/>
</dbReference>
<dbReference type="GO" id="GO:1990904">
    <property type="term" value="C:ribonucleoprotein complex"/>
    <property type="evidence" value="ECO:0007669"/>
    <property type="project" value="UniProtKB-KW"/>
</dbReference>
<dbReference type="GO" id="GO:0005840">
    <property type="term" value="C:ribosome"/>
    <property type="evidence" value="ECO:0007669"/>
    <property type="project" value="UniProtKB-KW"/>
</dbReference>
<dbReference type="GO" id="GO:0019843">
    <property type="term" value="F:rRNA binding"/>
    <property type="evidence" value="ECO:0007669"/>
    <property type="project" value="UniProtKB-UniRule"/>
</dbReference>
<dbReference type="GO" id="GO:0003735">
    <property type="term" value="F:structural constituent of ribosome"/>
    <property type="evidence" value="ECO:0007669"/>
    <property type="project" value="InterPro"/>
</dbReference>
<dbReference type="GO" id="GO:0006412">
    <property type="term" value="P:translation"/>
    <property type="evidence" value="ECO:0007669"/>
    <property type="project" value="UniProtKB-UniRule"/>
</dbReference>
<dbReference type="FunFam" id="3.30.70.330:FF:000001">
    <property type="entry name" value="50S ribosomal protein L23"/>
    <property type="match status" value="1"/>
</dbReference>
<dbReference type="Gene3D" id="3.30.70.330">
    <property type="match status" value="1"/>
</dbReference>
<dbReference type="HAMAP" id="MF_01369_B">
    <property type="entry name" value="Ribosomal_uL23_B"/>
    <property type="match status" value="1"/>
</dbReference>
<dbReference type="InterPro" id="IPR012677">
    <property type="entry name" value="Nucleotide-bd_a/b_plait_sf"/>
</dbReference>
<dbReference type="InterPro" id="IPR013025">
    <property type="entry name" value="Ribosomal_uL23-like"/>
</dbReference>
<dbReference type="InterPro" id="IPR012678">
    <property type="entry name" value="Ribosomal_uL23/eL15/eS24_sf"/>
</dbReference>
<dbReference type="InterPro" id="IPR001014">
    <property type="entry name" value="Ribosomal_uL23_CS"/>
</dbReference>
<dbReference type="NCBIfam" id="NF004363">
    <property type="entry name" value="PRK05738.2-4"/>
    <property type="match status" value="1"/>
</dbReference>
<dbReference type="NCBIfam" id="NF004365">
    <property type="entry name" value="PRK05738.3-1"/>
    <property type="match status" value="1"/>
</dbReference>
<dbReference type="NCBIfam" id="NF004366">
    <property type="entry name" value="PRK05738.3-2"/>
    <property type="match status" value="1"/>
</dbReference>
<dbReference type="NCBIfam" id="NF004368">
    <property type="entry name" value="PRK05738.3-4"/>
    <property type="match status" value="1"/>
</dbReference>
<dbReference type="PANTHER" id="PTHR11620">
    <property type="entry name" value="60S RIBOSOMAL PROTEIN L23A"/>
    <property type="match status" value="1"/>
</dbReference>
<dbReference type="Pfam" id="PF00276">
    <property type="entry name" value="Ribosomal_L23"/>
    <property type="match status" value="1"/>
</dbReference>
<dbReference type="SUPFAM" id="SSF54189">
    <property type="entry name" value="Ribosomal proteins S24e, L23 and L15e"/>
    <property type="match status" value="1"/>
</dbReference>
<dbReference type="PROSITE" id="PS00050">
    <property type="entry name" value="RIBOSOMAL_L23"/>
    <property type="match status" value="1"/>
</dbReference>
<feature type="chain" id="PRO_1000068132" description="Large ribosomal subunit protein uL23">
    <location>
        <begin position="1"/>
        <end position="100"/>
    </location>
</feature>
<protein>
    <recommendedName>
        <fullName evidence="1">Large ribosomal subunit protein uL23</fullName>
    </recommendedName>
    <alternativeName>
        <fullName evidence="2">50S ribosomal protein L23</fullName>
    </alternativeName>
</protein>
<evidence type="ECO:0000255" key="1">
    <source>
        <dbReference type="HAMAP-Rule" id="MF_01369"/>
    </source>
</evidence>
<evidence type="ECO:0000305" key="2"/>
<gene>
    <name evidence="1" type="primary">rplW</name>
    <name evidence="1" type="synonym">rpl23</name>
    <name type="ordered locus">P9301_17471</name>
</gene>